<accession>P30910</accession>
<name>NS1_I82A8</name>
<organism>
    <name type="scientific">Influenza A virus (strain A/Turkey/Bethlehem-Glilit/1492-B/1982 H1N1)</name>
    <dbReference type="NCBI Taxonomy" id="31663"/>
    <lineage>
        <taxon>Viruses</taxon>
        <taxon>Riboviria</taxon>
        <taxon>Orthornavirae</taxon>
        <taxon>Negarnaviricota</taxon>
        <taxon>Polyploviricotina</taxon>
        <taxon>Insthoviricetes</taxon>
        <taxon>Articulavirales</taxon>
        <taxon>Orthomyxoviridae</taxon>
        <taxon>Alphainfluenzavirus</taxon>
        <taxon>Alphainfluenzavirus influenzae</taxon>
        <taxon>Influenza A virus</taxon>
    </lineage>
</organism>
<comment type="function">
    <text evidence="1">Inhibits post-transcriptional processing of cellular pre-mRNA, by binding and inhibiting two cellular proteins that are required for the 3'-end processing of cellular pre-mRNAs: the 30 kDa cleavage and polyadenylation specificity factor/CPSF4 and the poly(A)-binding protein 2/PABPN1. In turn, unprocessed 3' end pre-mRNAs accumulate in the host nucleus and are no longer exported to the cytoplasm. Cellular protein synthesis is thereby shut off very early after virus infection. Viral protein synthesis is not affected by the inhibition of the cellular 3' end processing machinery because the poly(A) tails of viral mRNAs are produced by the viral polymerase through a stuttering mechanism. Prevents the establishment of the cellular antiviral state by inhibiting TRIM25-mediated RIGI ubiquitination, which normally triggers the antiviral transduction signal that leads to the activation of type I IFN genes by transcription factors IRF3 and IRF7. Also binds poly(A) and U6 snRNA. Inhibits the integrated stress response (ISR) in the infected cell by blocking dsRNA binding by EIF2AK2/PKR and further phosphorylation of EIF2S1/EIF-2ALPHA. Stress granule formation is thus inhibited, which allows protein synthesis and viral replication.</text>
</comment>
<comment type="subunit">
    <text evidence="1">Homodimer. Interacts with host TRIM25 (via coiled coil); this interaction specifically inhibits TRIM25 multimerization and TRIM25-mediated RIGI CARD ubiquitination. Interacts with human EIF2AK2/PKR, CPSF4, IVNS1ABP and PABPN1.</text>
</comment>
<comment type="subcellular location">
    <subcellularLocation>
        <location evidence="1">Host nucleus</location>
    </subcellularLocation>
    <subcellularLocation>
        <location evidence="1">Host cytoplasm</location>
    </subcellularLocation>
    <text evidence="1">In uninfected, transfected cells, NS1 is localized in the nucleus. Only in virus infected cells, the nuclear export signal is unveiled, presumably by a viral protein, and a fraction of NS1 is exported in the cytoplasm.</text>
</comment>
<comment type="alternative products">
    <event type="alternative splicing"/>
    <isoform>
        <id>P30910-1</id>
        <name>NS1</name>
        <sequence type="displayed"/>
    </isoform>
    <isoform>
        <id>P30915-1</id>
        <name>NEP</name>
        <name>NS2</name>
        <sequence type="external"/>
    </isoform>
</comment>
<comment type="domain">
    <text evidence="1">The dsRNA-binding region is required for suppression of RNA silencing.</text>
</comment>
<comment type="PTM">
    <text evidence="1">Upon interferon induction, ISGylated via host HERC5; this results in the impairment of NS1 interaction with RNA targets due to its inability to form homodimers and to interact with host EIF2AK2/PKR.</text>
</comment>
<comment type="similarity">
    <text evidence="1">Belongs to the influenza A viruses NS1 family.</text>
</comment>
<gene>
    <name evidence="1" type="primary">NS</name>
</gene>
<keyword id="KW-0025">Alternative splicing</keyword>
<keyword id="KW-1262">Eukaryotic host gene expression shutoff by virus</keyword>
<keyword id="KW-1035">Host cytoplasm</keyword>
<keyword id="KW-1190">Host gene expression shutoff by virus</keyword>
<keyword id="KW-1192">Host mRNA suppression by virus</keyword>
<keyword id="KW-1048">Host nucleus</keyword>
<keyword id="KW-0945">Host-virus interaction</keyword>
<keyword id="KW-1090">Inhibition of host innate immune response by virus</keyword>
<keyword id="KW-1114">Inhibition of host interferon signaling pathway by virus</keyword>
<keyword id="KW-1102">Inhibition of host PKR by virus</keyword>
<keyword id="KW-1103">Inhibition of host pre-mRNA processing by virus</keyword>
<keyword id="KW-1088">Inhibition of host RIG-I by virus</keyword>
<keyword id="KW-1113">Inhibition of host RLR pathway by virus</keyword>
<keyword id="KW-0922">Interferon antiviral system evasion</keyword>
<keyword id="KW-0694">RNA-binding</keyword>
<keyword id="KW-0832">Ubl conjugation</keyword>
<keyword id="KW-0899">Viral immunoevasion</keyword>
<reference key="1">
    <citation type="journal article" date="1991" name="Virology">
        <title>Phylogenetic relationship of the nonstructural (NS) genes of influenza A viruses.</title>
        <authorList>
            <person name="Ludwig S."/>
            <person name="Schultz U."/>
            <person name="Mandler J."/>
            <person name="Fitch W.M."/>
            <person name="Scholtissek C."/>
        </authorList>
    </citation>
    <scope>NUCLEOTIDE SEQUENCE [GENOMIC RNA]</scope>
</reference>
<reference key="2">
    <citation type="journal article" date="2003" name="Virology">
        <title>Intracellular warfare between human influenza viruses and human cells: the roles of the viral NS1 protein.</title>
        <authorList>
            <person name="Krug R.M."/>
            <person name="Yuan W."/>
            <person name="Noah D.L."/>
            <person name="Latham A.G."/>
        </authorList>
    </citation>
    <scope>REVIEW</scope>
</reference>
<dbReference type="EMBL" id="M55467">
    <property type="protein sequence ID" value="AAA43124.1"/>
    <property type="molecule type" value="Genomic_RNA"/>
</dbReference>
<dbReference type="SMR" id="P30910"/>
<dbReference type="IntAct" id="P30910">
    <property type="interactions" value="1"/>
</dbReference>
<dbReference type="MINT" id="P30910"/>
<dbReference type="GO" id="GO:0030430">
    <property type="term" value="C:host cell cytoplasm"/>
    <property type="evidence" value="ECO:0007669"/>
    <property type="project" value="UniProtKB-SubCell"/>
</dbReference>
<dbReference type="GO" id="GO:0042025">
    <property type="term" value="C:host cell nucleus"/>
    <property type="evidence" value="ECO:0007669"/>
    <property type="project" value="UniProtKB-SubCell"/>
</dbReference>
<dbReference type="GO" id="GO:0030291">
    <property type="term" value="F:protein serine/threonine kinase inhibitor activity"/>
    <property type="evidence" value="ECO:0007669"/>
    <property type="project" value="UniProtKB-KW"/>
</dbReference>
<dbReference type="GO" id="GO:0003723">
    <property type="term" value="F:RNA binding"/>
    <property type="evidence" value="ECO:0007669"/>
    <property type="project" value="UniProtKB-KW"/>
</dbReference>
<dbReference type="GO" id="GO:0039540">
    <property type="term" value="P:symbiont-mediated suppression of host cytoplasmic pattern recognition receptor signaling pathway via inhibition of RIG-I activity"/>
    <property type="evidence" value="ECO:0007669"/>
    <property type="project" value="UniProtKB-KW"/>
</dbReference>
<dbReference type="GO" id="GO:0039657">
    <property type="term" value="P:symbiont-mediated suppression of host gene expression"/>
    <property type="evidence" value="ECO:0007669"/>
    <property type="project" value="UniProtKB-KW"/>
</dbReference>
<dbReference type="GO" id="GO:0039524">
    <property type="term" value="P:symbiont-mediated suppression of host mRNA processing"/>
    <property type="evidence" value="ECO:0007669"/>
    <property type="project" value="UniProtKB-KW"/>
</dbReference>
<dbReference type="GO" id="GO:0039580">
    <property type="term" value="P:symbiont-mediated suppression of host PKR/eIFalpha signaling"/>
    <property type="evidence" value="ECO:0007669"/>
    <property type="project" value="UniProtKB-KW"/>
</dbReference>
<dbReference type="GO" id="GO:0039502">
    <property type="term" value="P:symbiont-mediated suppression of host type I interferon-mediated signaling pathway"/>
    <property type="evidence" value="ECO:0007669"/>
    <property type="project" value="UniProtKB-KW"/>
</dbReference>
<dbReference type="Gene3D" id="3.30.420.330">
    <property type="entry name" value="Influenza virus non-structural protein, effector domain"/>
    <property type="match status" value="1"/>
</dbReference>
<dbReference type="Gene3D" id="1.10.287.10">
    <property type="entry name" value="S15/NS1, RNA-binding"/>
    <property type="match status" value="1"/>
</dbReference>
<dbReference type="HAMAP" id="MF_04066">
    <property type="entry name" value="INFV_NS1"/>
    <property type="match status" value="1"/>
</dbReference>
<dbReference type="InterPro" id="IPR004208">
    <property type="entry name" value="NS1"/>
</dbReference>
<dbReference type="InterPro" id="IPR000256">
    <property type="entry name" value="NS1A"/>
</dbReference>
<dbReference type="InterPro" id="IPR038064">
    <property type="entry name" value="NS1A_effect_dom-like_sf"/>
</dbReference>
<dbReference type="InterPro" id="IPR009068">
    <property type="entry name" value="uS15_NS1_RNA-bd_sf"/>
</dbReference>
<dbReference type="Pfam" id="PF00600">
    <property type="entry name" value="Flu_NS1"/>
    <property type="match status" value="1"/>
</dbReference>
<dbReference type="SUPFAM" id="SSF143021">
    <property type="entry name" value="Ns1 effector domain-like"/>
    <property type="match status" value="1"/>
</dbReference>
<dbReference type="SUPFAM" id="SSF47060">
    <property type="entry name" value="S15/NS1 RNA-binding domain"/>
    <property type="match status" value="1"/>
</dbReference>
<sequence length="230" mass="26174">MDSNTITSFQVDCYLWHIRKLLSMRDMCDAPFDDRLRRDQKALKGRGSTLGLDLRVATMEGKKIVEDILKSETDENLKIAIASSPAPRYITDMSIEEISREWYMLMPRQKITGGLMVKMDQAIMDKRIILKANFSVLFDQLETLVSLRAFTEDGAIVAEISPIPSMPGHSTEDVKNAIGILIGGLEWNDNSIRASENIQRFAWGIRDENGRPPLPPKQKRYMARRVESEV</sequence>
<proteinExistence type="inferred from homology"/>
<protein>
    <recommendedName>
        <fullName evidence="1">Non-structural protein 1</fullName>
        <shortName evidence="1">NS1</shortName>
    </recommendedName>
    <alternativeName>
        <fullName evidence="1">NS1A</fullName>
    </alternativeName>
</protein>
<evidence type="ECO:0000255" key="1">
    <source>
        <dbReference type="HAMAP-Rule" id="MF_04066"/>
    </source>
</evidence>
<feature type="chain" id="PRO_0000078947" description="Non-structural protein 1">
    <location>
        <begin position="1"/>
        <end position="230"/>
    </location>
</feature>
<feature type="region of interest" description="RNA-binding and homodimerization" evidence="1">
    <location>
        <begin position="1"/>
        <end position="73"/>
    </location>
</feature>
<feature type="region of interest" description="CPSF4-binding" evidence="1">
    <location>
        <begin position="180"/>
        <end position="215"/>
    </location>
</feature>
<feature type="region of interest" description="PABPN1-binding" evidence="1">
    <location>
        <begin position="223"/>
        <end position="230"/>
    </location>
</feature>
<feature type="short sequence motif" description="Nuclear localization signal" evidence="1">
    <location>
        <begin position="34"/>
        <end position="38"/>
    </location>
</feature>
<feature type="short sequence motif" description="Nuclear export signal" evidence="1">
    <location>
        <begin position="137"/>
        <end position="146"/>
    </location>
</feature>
<organismHost>
    <name type="scientific">Aves</name>
    <dbReference type="NCBI Taxonomy" id="8782"/>
</organismHost>
<organismHost>
    <name type="scientific">Homo sapiens</name>
    <name type="common">Human</name>
    <dbReference type="NCBI Taxonomy" id="9606"/>
</organismHost>
<organismHost>
    <name type="scientific">Sus scrofa</name>
    <name type="common">Pig</name>
    <dbReference type="NCBI Taxonomy" id="9823"/>
</organismHost>